<reference key="1">
    <citation type="journal article" date="2001" name="Proc. Natl. Acad. Sci. U.S.A.">
        <title>Complete genome sequence of Caulobacter crescentus.</title>
        <authorList>
            <person name="Nierman W.C."/>
            <person name="Feldblyum T.V."/>
            <person name="Laub M.T."/>
            <person name="Paulsen I.T."/>
            <person name="Nelson K.E."/>
            <person name="Eisen J.A."/>
            <person name="Heidelberg J.F."/>
            <person name="Alley M.R.K."/>
            <person name="Ohta N."/>
            <person name="Maddock J.R."/>
            <person name="Potocka I."/>
            <person name="Nelson W.C."/>
            <person name="Newton A."/>
            <person name="Stephens C."/>
            <person name="Phadke N.D."/>
            <person name="Ely B."/>
            <person name="DeBoy R.T."/>
            <person name="Dodson R.J."/>
            <person name="Durkin A.S."/>
            <person name="Gwinn M.L."/>
            <person name="Haft D.H."/>
            <person name="Kolonay J.F."/>
            <person name="Smit J."/>
            <person name="Craven M.B."/>
            <person name="Khouri H.M."/>
            <person name="Shetty J."/>
            <person name="Berry K.J."/>
            <person name="Utterback T.R."/>
            <person name="Tran K."/>
            <person name="Wolf A.M."/>
            <person name="Vamathevan J.J."/>
            <person name="Ermolaeva M.D."/>
            <person name="White O."/>
            <person name="Salzberg S.L."/>
            <person name="Venter J.C."/>
            <person name="Shapiro L."/>
            <person name="Fraser C.M."/>
        </authorList>
    </citation>
    <scope>NUCLEOTIDE SEQUENCE [LARGE SCALE GENOMIC DNA]</scope>
    <source>
        <strain>ATCC 19089 / CIP 103742 / CB 15</strain>
    </source>
</reference>
<evidence type="ECO:0000255" key="1">
    <source>
        <dbReference type="HAMAP-Rule" id="MF_01204"/>
    </source>
</evidence>
<feature type="chain" id="PRO_0000072728" description="Putative NADH dehydrogenase/NAD(P)H nitroreductase CC_0061">
    <location>
        <begin position="1"/>
        <end position="195"/>
    </location>
</feature>
<sequence>MAKLDDATLAQLFTEARSHNGWNPEPLPESVLRELYALTKFGPTAANGSPARFYFVTSAEAKERLAKLSSGSNGPKIMQAPCTVIIGYDLDFPQTLPKLFPHAPGAKDWFNDPVAKEWCALRNSSLQGGYFMIGARALGLDVGPMSGFDNAAVDAEFFAGTNIKSNFIVSIGHGTDEGLFPRNPRLDFDEAAKIL</sequence>
<accession>Q9AC08</accession>
<protein>
    <recommendedName>
        <fullName evidence="1">Putative NADH dehydrogenase/NAD(P)H nitroreductase CC_0061</fullName>
        <ecNumber evidence="1">1.-.-.-</ecNumber>
    </recommendedName>
</protein>
<keyword id="KW-0285">Flavoprotein</keyword>
<keyword id="KW-0288">FMN</keyword>
<keyword id="KW-0520">NAD</keyword>
<keyword id="KW-0521">NADP</keyword>
<keyword id="KW-0560">Oxidoreductase</keyword>
<keyword id="KW-1185">Reference proteome</keyword>
<gene>
    <name type="ordered locus">CC_0061</name>
</gene>
<proteinExistence type="inferred from homology"/>
<dbReference type="EC" id="1.-.-.-" evidence="1"/>
<dbReference type="EMBL" id="AE005673">
    <property type="protein sequence ID" value="AAK22048.1"/>
    <property type="molecule type" value="Genomic_DNA"/>
</dbReference>
<dbReference type="PIR" id="D87256">
    <property type="entry name" value="D87256"/>
</dbReference>
<dbReference type="RefSeq" id="NP_418880.1">
    <property type="nucleotide sequence ID" value="NC_002696.2"/>
</dbReference>
<dbReference type="RefSeq" id="WP_010917950.1">
    <property type="nucleotide sequence ID" value="NC_002696.2"/>
</dbReference>
<dbReference type="SMR" id="Q9AC08"/>
<dbReference type="STRING" id="190650.CC_0061"/>
<dbReference type="DNASU" id="944118"/>
<dbReference type="EnsemblBacteria" id="AAK22048">
    <property type="protein sequence ID" value="AAK22048"/>
    <property type="gene ID" value="CC_0061"/>
</dbReference>
<dbReference type="KEGG" id="ccr:CC_0061"/>
<dbReference type="PATRIC" id="fig|190650.5.peg.58"/>
<dbReference type="eggNOG" id="COG0778">
    <property type="taxonomic scope" value="Bacteria"/>
</dbReference>
<dbReference type="HOGENOM" id="CLU_084441_0_0_5"/>
<dbReference type="BioCyc" id="CAULO:CC0061-MONOMER"/>
<dbReference type="Proteomes" id="UP000001816">
    <property type="component" value="Chromosome"/>
</dbReference>
<dbReference type="GO" id="GO:0016491">
    <property type="term" value="F:oxidoreductase activity"/>
    <property type="evidence" value="ECO:0007669"/>
    <property type="project" value="UniProtKB-UniRule"/>
</dbReference>
<dbReference type="CDD" id="cd02148">
    <property type="entry name" value="RutE-like"/>
    <property type="match status" value="1"/>
</dbReference>
<dbReference type="Gene3D" id="3.40.109.10">
    <property type="entry name" value="NADH Oxidase"/>
    <property type="match status" value="1"/>
</dbReference>
<dbReference type="HAMAP" id="MF_01204">
    <property type="entry name" value="Oxidoreductase_RutE_HadB"/>
    <property type="match status" value="1"/>
</dbReference>
<dbReference type="InterPro" id="IPR029479">
    <property type="entry name" value="Nitroreductase"/>
</dbReference>
<dbReference type="InterPro" id="IPR000415">
    <property type="entry name" value="Nitroreductase-like"/>
</dbReference>
<dbReference type="InterPro" id="IPR050461">
    <property type="entry name" value="Nitroreductase_HadB/RutE"/>
</dbReference>
<dbReference type="InterPro" id="IPR023936">
    <property type="entry name" value="RutE-like"/>
</dbReference>
<dbReference type="NCBIfam" id="NF003768">
    <property type="entry name" value="PRK05365.1"/>
    <property type="match status" value="1"/>
</dbReference>
<dbReference type="PANTHER" id="PTHR43543">
    <property type="entry name" value="MALONIC SEMIALDEHYDE REDUCTASE RUTE-RELATED"/>
    <property type="match status" value="1"/>
</dbReference>
<dbReference type="PANTHER" id="PTHR43543:SF1">
    <property type="entry name" value="MALONIC SEMIALDEHYDE REDUCTASE RUTE-RELATED"/>
    <property type="match status" value="1"/>
</dbReference>
<dbReference type="Pfam" id="PF00881">
    <property type="entry name" value="Nitroreductase"/>
    <property type="match status" value="1"/>
</dbReference>
<dbReference type="SUPFAM" id="SSF55469">
    <property type="entry name" value="FMN-dependent nitroreductase-like"/>
    <property type="match status" value="1"/>
</dbReference>
<comment type="cofactor">
    <cofactor evidence="1">
        <name>FMN</name>
        <dbReference type="ChEBI" id="CHEBI:58210"/>
    </cofactor>
</comment>
<comment type="similarity">
    <text evidence="1">Belongs to the nitroreductase family. HadB/RutE subfamily.</text>
</comment>
<organism>
    <name type="scientific">Caulobacter vibrioides (strain ATCC 19089 / CIP 103742 / CB 15)</name>
    <name type="common">Caulobacter crescentus</name>
    <dbReference type="NCBI Taxonomy" id="190650"/>
    <lineage>
        <taxon>Bacteria</taxon>
        <taxon>Pseudomonadati</taxon>
        <taxon>Pseudomonadota</taxon>
        <taxon>Alphaproteobacteria</taxon>
        <taxon>Caulobacterales</taxon>
        <taxon>Caulobacteraceae</taxon>
        <taxon>Caulobacter</taxon>
    </lineage>
</organism>
<name>Y061_CAUVC</name>